<name>ATPB_MYCTU</name>
<sequence>MTTTAEKTDRPGKPGSSDTSGRVVRVTGPVVDVEFPRGSIPELFNALHAEITFESLAKTLTLEVAQHLGDNLVRTISLQPTDGLVRGVEVIDTGRSISVPVGEGVKGHVFNALGDCLDEPGYGEKFEHWSIHRKPPAFEELEPRTEMLETGLKVVDLLTPYVRGGKIALFGGAGVGKTVLIQEMINRIARNFGGTSVFAGVGERTREGNDLWVELAEANVLKDTALVFGQMDEPPGTRMRVALSALTMAEWFRDEQGQDVLLFIDNIFRFTQAGSEVSTLLGRMPSAVGYQPTLADEMGELQERITSTRGRSITSMQAVYVPADDYTDPAPATTFAHLDATTELSRAVFSKGIFPAVDPLASSSTILDPSVVGDEHYRVAQEVIRILQRYKDLQDIIAILGIDELSEEDKQLVNRARRIERFLSQNMMAAEQFTGQPGSTVPVKETIEAFDRLCKGDFDHVPEQAFFLIGGLDDLAKKAESLGAKL</sequence>
<dbReference type="EC" id="7.1.2.2" evidence="1"/>
<dbReference type="EMBL" id="AL123456">
    <property type="protein sequence ID" value="CCP44067.1"/>
    <property type="molecule type" value="Genomic_DNA"/>
</dbReference>
<dbReference type="PIR" id="B70775">
    <property type="entry name" value="B70775"/>
</dbReference>
<dbReference type="RefSeq" id="NP_215826.1">
    <property type="nucleotide sequence ID" value="NC_000962.3"/>
</dbReference>
<dbReference type="RefSeq" id="WP_003406701.1">
    <property type="nucleotide sequence ID" value="NZ_NVQJ01000030.1"/>
</dbReference>
<dbReference type="PDB" id="8J0S">
    <property type="method" value="EM"/>
    <property type="resolution" value="2.58 A"/>
    <property type="chains" value="D/E/F=1-486"/>
</dbReference>
<dbReference type="PDB" id="8J0T">
    <property type="method" value="EM"/>
    <property type="resolution" value="2.80 A"/>
    <property type="chains" value="D/E/F=1-486"/>
</dbReference>
<dbReference type="PDB" id="8JR0">
    <property type="method" value="EM"/>
    <property type="resolution" value="2.80 A"/>
    <property type="chains" value="D/E/F=1-486"/>
</dbReference>
<dbReference type="PDBsum" id="8J0S"/>
<dbReference type="PDBsum" id="8J0T"/>
<dbReference type="PDBsum" id="8JR0"/>
<dbReference type="EMDB" id="EMD-35909"/>
<dbReference type="EMDB" id="EMD-35911"/>
<dbReference type="EMDB" id="EMD-36589"/>
<dbReference type="SMR" id="P9WPU5"/>
<dbReference type="FunCoup" id="P9WPU5">
    <property type="interactions" value="344"/>
</dbReference>
<dbReference type="STRING" id="83332.Rv1310"/>
<dbReference type="BindingDB" id="P9WPU5"/>
<dbReference type="ChEMBL" id="CHEMBL2364166"/>
<dbReference type="DrugCentral" id="P9WPU5"/>
<dbReference type="iPTMnet" id="P9WPU5"/>
<dbReference type="PaxDb" id="83332-Rv1310"/>
<dbReference type="DNASU" id="886932"/>
<dbReference type="GeneID" id="45425284"/>
<dbReference type="GeneID" id="886932"/>
<dbReference type="KEGG" id="mtu:Rv1310"/>
<dbReference type="KEGG" id="mtv:RVBD_1310"/>
<dbReference type="TubercuList" id="Rv1310"/>
<dbReference type="eggNOG" id="COG0055">
    <property type="taxonomic scope" value="Bacteria"/>
</dbReference>
<dbReference type="InParanoid" id="P9WPU5"/>
<dbReference type="OrthoDB" id="9801639at2"/>
<dbReference type="PhylomeDB" id="P9WPU5"/>
<dbReference type="PRO" id="PR:P9WPU5"/>
<dbReference type="Proteomes" id="UP000001584">
    <property type="component" value="Chromosome"/>
</dbReference>
<dbReference type="GO" id="GO:0005829">
    <property type="term" value="C:cytosol"/>
    <property type="evidence" value="ECO:0007005"/>
    <property type="project" value="MTBBASE"/>
</dbReference>
<dbReference type="GO" id="GO:0005576">
    <property type="term" value="C:extracellular region"/>
    <property type="evidence" value="ECO:0007005"/>
    <property type="project" value="MTBBASE"/>
</dbReference>
<dbReference type="GO" id="GO:0009274">
    <property type="term" value="C:peptidoglycan-based cell wall"/>
    <property type="evidence" value="ECO:0007005"/>
    <property type="project" value="MTBBASE"/>
</dbReference>
<dbReference type="GO" id="GO:0005886">
    <property type="term" value="C:plasma membrane"/>
    <property type="evidence" value="ECO:0007005"/>
    <property type="project" value="MTBBASE"/>
</dbReference>
<dbReference type="GO" id="GO:0045259">
    <property type="term" value="C:proton-transporting ATP synthase complex"/>
    <property type="evidence" value="ECO:0007669"/>
    <property type="project" value="UniProtKB-KW"/>
</dbReference>
<dbReference type="GO" id="GO:0005524">
    <property type="term" value="F:ATP binding"/>
    <property type="evidence" value="ECO:0007669"/>
    <property type="project" value="UniProtKB-UniRule"/>
</dbReference>
<dbReference type="GO" id="GO:0016887">
    <property type="term" value="F:ATP hydrolysis activity"/>
    <property type="evidence" value="ECO:0007669"/>
    <property type="project" value="InterPro"/>
</dbReference>
<dbReference type="GO" id="GO:0046933">
    <property type="term" value="F:proton-transporting ATP synthase activity, rotational mechanism"/>
    <property type="evidence" value="ECO:0007669"/>
    <property type="project" value="UniProtKB-UniRule"/>
</dbReference>
<dbReference type="CDD" id="cd18110">
    <property type="entry name" value="ATP-synt_F1_beta_C"/>
    <property type="match status" value="1"/>
</dbReference>
<dbReference type="CDD" id="cd18115">
    <property type="entry name" value="ATP-synt_F1_beta_N"/>
    <property type="match status" value="1"/>
</dbReference>
<dbReference type="CDD" id="cd01133">
    <property type="entry name" value="F1-ATPase_beta_CD"/>
    <property type="match status" value="1"/>
</dbReference>
<dbReference type="FunFam" id="1.10.1140.10:FF:000001">
    <property type="entry name" value="ATP synthase subunit beta"/>
    <property type="match status" value="1"/>
</dbReference>
<dbReference type="FunFam" id="2.40.10.170:FF:000005">
    <property type="entry name" value="ATP synthase subunit beta"/>
    <property type="match status" value="1"/>
</dbReference>
<dbReference type="FunFam" id="3.40.50.300:FF:000004">
    <property type="entry name" value="ATP synthase subunit beta"/>
    <property type="match status" value="1"/>
</dbReference>
<dbReference type="Gene3D" id="2.40.10.170">
    <property type="match status" value="1"/>
</dbReference>
<dbReference type="Gene3D" id="1.10.1140.10">
    <property type="entry name" value="Bovine Mitochondrial F1-atpase, Atp Synthase Beta Chain, Chain D, domain 3"/>
    <property type="match status" value="1"/>
</dbReference>
<dbReference type="Gene3D" id="3.40.50.300">
    <property type="entry name" value="P-loop containing nucleotide triphosphate hydrolases"/>
    <property type="match status" value="1"/>
</dbReference>
<dbReference type="HAMAP" id="MF_01347">
    <property type="entry name" value="ATP_synth_beta_bact"/>
    <property type="match status" value="1"/>
</dbReference>
<dbReference type="InterPro" id="IPR003593">
    <property type="entry name" value="AAA+_ATPase"/>
</dbReference>
<dbReference type="InterPro" id="IPR055190">
    <property type="entry name" value="ATP-synt_VA_C"/>
</dbReference>
<dbReference type="InterPro" id="IPR005722">
    <property type="entry name" value="ATP_synth_F1_bsu"/>
</dbReference>
<dbReference type="InterPro" id="IPR020003">
    <property type="entry name" value="ATPase_a/bsu_AS"/>
</dbReference>
<dbReference type="InterPro" id="IPR050053">
    <property type="entry name" value="ATPase_alpha/beta_chains"/>
</dbReference>
<dbReference type="InterPro" id="IPR004100">
    <property type="entry name" value="ATPase_F1/V1/A1_a/bsu_N"/>
</dbReference>
<dbReference type="InterPro" id="IPR036121">
    <property type="entry name" value="ATPase_F1/V1/A1_a/bsu_N_sf"/>
</dbReference>
<dbReference type="InterPro" id="IPR000194">
    <property type="entry name" value="ATPase_F1/V1/A1_a/bsu_nucl-bd"/>
</dbReference>
<dbReference type="InterPro" id="IPR024034">
    <property type="entry name" value="ATPase_F1/V1_b/a_C"/>
</dbReference>
<dbReference type="InterPro" id="IPR027417">
    <property type="entry name" value="P-loop_NTPase"/>
</dbReference>
<dbReference type="NCBIfam" id="TIGR01039">
    <property type="entry name" value="atpD"/>
    <property type="match status" value="1"/>
</dbReference>
<dbReference type="PANTHER" id="PTHR15184">
    <property type="entry name" value="ATP SYNTHASE"/>
    <property type="match status" value="1"/>
</dbReference>
<dbReference type="PANTHER" id="PTHR15184:SF71">
    <property type="entry name" value="ATP SYNTHASE SUBUNIT BETA, MITOCHONDRIAL"/>
    <property type="match status" value="1"/>
</dbReference>
<dbReference type="Pfam" id="PF00006">
    <property type="entry name" value="ATP-synt_ab"/>
    <property type="match status" value="1"/>
</dbReference>
<dbReference type="Pfam" id="PF02874">
    <property type="entry name" value="ATP-synt_ab_N"/>
    <property type="match status" value="1"/>
</dbReference>
<dbReference type="Pfam" id="PF22919">
    <property type="entry name" value="ATP-synt_VA_C"/>
    <property type="match status" value="1"/>
</dbReference>
<dbReference type="SMART" id="SM00382">
    <property type="entry name" value="AAA"/>
    <property type="match status" value="1"/>
</dbReference>
<dbReference type="SUPFAM" id="SSF47917">
    <property type="entry name" value="C-terminal domain of alpha and beta subunits of F1 ATP synthase"/>
    <property type="match status" value="1"/>
</dbReference>
<dbReference type="SUPFAM" id="SSF50615">
    <property type="entry name" value="N-terminal domain of alpha and beta subunits of F1 ATP synthase"/>
    <property type="match status" value="1"/>
</dbReference>
<dbReference type="SUPFAM" id="SSF52540">
    <property type="entry name" value="P-loop containing nucleoside triphosphate hydrolases"/>
    <property type="match status" value="1"/>
</dbReference>
<dbReference type="PROSITE" id="PS00152">
    <property type="entry name" value="ATPASE_ALPHA_BETA"/>
    <property type="match status" value="1"/>
</dbReference>
<proteinExistence type="evidence at protein level"/>
<keyword id="KW-0002">3D-structure</keyword>
<keyword id="KW-0007">Acetylation</keyword>
<keyword id="KW-0066">ATP synthesis</keyword>
<keyword id="KW-0067">ATP-binding</keyword>
<keyword id="KW-1003">Cell membrane</keyword>
<keyword id="KW-0139">CF(1)</keyword>
<keyword id="KW-0375">Hydrogen ion transport</keyword>
<keyword id="KW-0406">Ion transport</keyword>
<keyword id="KW-0472">Membrane</keyword>
<keyword id="KW-0547">Nucleotide-binding</keyword>
<keyword id="KW-1185">Reference proteome</keyword>
<keyword id="KW-1278">Translocase</keyword>
<keyword id="KW-0813">Transport</keyword>
<protein>
    <recommendedName>
        <fullName evidence="1">ATP synthase subunit beta</fullName>
        <ecNumber evidence="1">7.1.2.2</ecNumber>
    </recommendedName>
    <alternativeName>
        <fullName evidence="1">ATP synthase F1 sector subunit beta</fullName>
    </alternativeName>
    <alternativeName>
        <fullName evidence="1">F-ATPase subunit beta</fullName>
    </alternativeName>
</protein>
<accession>P9WPU5</accession>
<accession>L0T6H4</accession>
<accession>P63677</accession>
<accession>Q10593</accession>
<gene>
    <name evidence="1" type="primary">atpD</name>
    <name type="ordered locus">Rv1310</name>
    <name type="ORF">MTCY373.30</name>
</gene>
<evidence type="ECO:0000255" key="1">
    <source>
        <dbReference type="HAMAP-Rule" id="MF_01347"/>
    </source>
</evidence>
<evidence type="ECO:0000256" key="2">
    <source>
        <dbReference type="SAM" id="MobiDB-lite"/>
    </source>
</evidence>
<evidence type="ECO:0007744" key="3">
    <source>
    </source>
</evidence>
<evidence type="ECO:0007829" key="4">
    <source>
        <dbReference type="PDB" id="8J0S"/>
    </source>
</evidence>
<evidence type="ECO:0007829" key="5">
    <source>
        <dbReference type="PDB" id="8J0T"/>
    </source>
</evidence>
<comment type="function">
    <text evidence="1">Produces ATP from ADP in the presence of a proton gradient across the membrane. The catalytic sites are hosted primarily by the beta subunits.</text>
</comment>
<comment type="catalytic activity">
    <reaction evidence="1">
        <text>ATP + H2O + 4 H(+)(in) = ADP + phosphate + 5 H(+)(out)</text>
        <dbReference type="Rhea" id="RHEA:57720"/>
        <dbReference type="ChEBI" id="CHEBI:15377"/>
        <dbReference type="ChEBI" id="CHEBI:15378"/>
        <dbReference type="ChEBI" id="CHEBI:30616"/>
        <dbReference type="ChEBI" id="CHEBI:43474"/>
        <dbReference type="ChEBI" id="CHEBI:456216"/>
        <dbReference type="EC" id="7.1.2.2"/>
    </reaction>
</comment>
<comment type="subunit">
    <text evidence="1">F-type ATPases have 2 components, CF(1) - the catalytic core - and CF(0) - the membrane proton channel. CF(1) has five subunits: alpha(3), beta(3), gamma(1), delta(1), epsilon(1). CF(0) has three main subunits: a(1), b(2) and c(9-12). The alpha and beta chains form an alternating ring which encloses part of the gamma chain. CF(1) is attached to CF(0) by a central stalk formed by the gamma and epsilon chains, while a peripheral stalk is formed by the delta and b chains.</text>
</comment>
<comment type="subcellular location">
    <subcellularLocation>
        <location evidence="1">Cell membrane</location>
        <topology evidence="1">Peripheral membrane protein</topology>
    </subcellularLocation>
</comment>
<comment type="similarity">
    <text evidence="1">Belongs to the ATPase alpha/beta chains family.</text>
</comment>
<organism>
    <name type="scientific">Mycobacterium tuberculosis (strain ATCC 25618 / H37Rv)</name>
    <dbReference type="NCBI Taxonomy" id="83332"/>
    <lineage>
        <taxon>Bacteria</taxon>
        <taxon>Bacillati</taxon>
        <taxon>Actinomycetota</taxon>
        <taxon>Actinomycetes</taxon>
        <taxon>Mycobacteriales</taxon>
        <taxon>Mycobacteriaceae</taxon>
        <taxon>Mycobacterium</taxon>
        <taxon>Mycobacterium tuberculosis complex</taxon>
    </lineage>
</organism>
<reference key="1">
    <citation type="journal article" date="1998" name="Nature">
        <title>Deciphering the biology of Mycobacterium tuberculosis from the complete genome sequence.</title>
        <authorList>
            <person name="Cole S.T."/>
            <person name="Brosch R."/>
            <person name="Parkhill J."/>
            <person name="Garnier T."/>
            <person name="Churcher C.M."/>
            <person name="Harris D.E."/>
            <person name="Gordon S.V."/>
            <person name="Eiglmeier K."/>
            <person name="Gas S."/>
            <person name="Barry C.E. III"/>
            <person name="Tekaia F."/>
            <person name="Badcock K."/>
            <person name="Basham D."/>
            <person name="Brown D."/>
            <person name="Chillingworth T."/>
            <person name="Connor R."/>
            <person name="Davies R.M."/>
            <person name="Devlin K."/>
            <person name="Feltwell T."/>
            <person name="Gentles S."/>
            <person name="Hamlin N."/>
            <person name="Holroyd S."/>
            <person name="Hornsby T."/>
            <person name="Jagels K."/>
            <person name="Krogh A."/>
            <person name="McLean J."/>
            <person name="Moule S."/>
            <person name="Murphy L.D."/>
            <person name="Oliver S."/>
            <person name="Osborne J."/>
            <person name="Quail M.A."/>
            <person name="Rajandream M.A."/>
            <person name="Rogers J."/>
            <person name="Rutter S."/>
            <person name="Seeger K."/>
            <person name="Skelton S."/>
            <person name="Squares S."/>
            <person name="Squares R."/>
            <person name="Sulston J.E."/>
            <person name="Taylor K."/>
            <person name="Whitehead S."/>
            <person name="Barrell B.G."/>
        </authorList>
    </citation>
    <scope>NUCLEOTIDE SEQUENCE [LARGE SCALE GENOMIC DNA]</scope>
    <source>
        <strain>ATCC 25618 / H37Rv</strain>
    </source>
</reference>
<reference key="2">
    <citation type="journal article" date="2011" name="Mol. Cell. Proteomics">
        <title>Proteogenomic analysis of Mycobacterium tuberculosis by high resolution mass spectrometry.</title>
        <authorList>
            <person name="Kelkar D.S."/>
            <person name="Kumar D."/>
            <person name="Kumar P."/>
            <person name="Balakrishnan L."/>
            <person name="Muthusamy B."/>
            <person name="Yadav A.K."/>
            <person name="Shrivastava P."/>
            <person name="Marimuthu A."/>
            <person name="Anand S."/>
            <person name="Sundaram H."/>
            <person name="Kingsbury R."/>
            <person name="Harsha H.C."/>
            <person name="Nair B."/>
            <person name="Prasad T.S."/>
            <person name="Chauhan D.S."/>
            <person name="Katoch K."/>
            <person name="Katoch V.M."/>
            <person name="Kumar P."/>
            <person name="Chaerkady R."/>
            <person name="Ramachandran S."/>
            <person name="Dash D."/>
            <person name="Pandey A."/>
        </authorList>
    </citation>
    <scope>ACETYLATION [LARGE SCALE ANALYSIS] AT THR-2</scope>
    <scope>CLEAVAGE OF INITIATOR METHIONINE [LARGE SCALE ANALYSIS]</scope>
    <scope>IDENTIFICATION BY MASS SPECTROMETRY [LARGE SCALE ANALYSIS]</scope>
    <source>
        <strain>ATCC 25618 / H37Rv</strain>
    </source>
</reference>
<feature type="initiator methionine" description="Removed" evidence="3">
    <location>
        <position position="1"/>
    </location>
</feature>
<feature type="chain" id="PRO_0000144455" description="ATP synthase subunit beta">
    <location>
        <begin position="2"/>
        <end position="486"/>
    </location>
</feature>
<feature type="region of interest" description="Disordered" evidence="2">
    <location>
        <begin position="1"/>
        <end position="22"/>
    </location>
</feature>
<feature type="compositionally biased region" description="Basic and acidic residues" evidence="2">
    <location>
        <begin position="1"/>
        <end position="12"/>
    </location>
</feature>
<feature type="binding site" evidence="1">
    <location>
        <begin position="171"/>
        <end position="178"/>
    </location>
    <ligand>
        <name>ATP</name>
        <dbReference type="ChEBI" id="CHEBI:30616"/>
    </ligand>
</feature>
<feature type="modified residue" description="N-acetylthreonine" evidence="3">
    <location>
        <position position="2"/>
    </location>
</feature>
<feature type="strand" evidence="4">
    <location>
        <begin position="21"/>
        <end position="27"/>
    </location>
</feature>
<feature type="strand" evidence="4">
    <location>
        <begin position="30"/>
        <end position="34"/>
    </location>
</feature>
<feature type="strand" evidence="4">
    <location>
        <begin position="46"/>
        <end position="51"/>
    </location>
</feature>
<feature type="helix" evidence="4">
    <location>
        <begin position="54"/>
        <end position="56"/>
    </location>
</feature>
<feature type="strand" evidence="4">
    <location>
        <begin position="58"/>
        <end position="69"/>
    </location>
</feature>
<feature type="strand" evidence="4">
    <location>
        <begin position="72"/>
        <end position="79"/>
    </location>
</feature>
<feature type="strand" evidence="4">
    <location>
        <begin position="89"/>
        <end position="92"/>
    </location>
</feature>
<feature type="strand" evidence="4">
    <location>
        <begin position="98"/>
        <end position="102"/>
    </location>
</feature>
<feature type="helix" evidence="4">
    <location>
        <begin position="103"/>
        <end position="105"/>
    </location>
</feature>
<feature type="strand" evidence="5">
    <location>
        <begin position="108"/>
        <end position="110"/>
    </location>
</feature>
<feature type="strand" evidence="5">
    <location>
        <begin position="112"/>
        <end position="114"/>
    </location>
</feature>
<feature type="strand" evidence="4">
    <location>
        <begin position="116"/>
        <end position="119"/>
    </location>
</feature>
<feature type="turn" evidence="4">
    <location>
        <begin position="120"/>
        <end position="125"/>
    </location>
</feature>
<feature type="strand" evidence="4">
    <location>
        <begin position="126"/>
        <end position="131"/>
    </location>
</feature>
<feature type="helix" evidence="4">
    <location>
        <begin position="138"/>
        <end position="140"/>
    </location>
</feature>
<feature type="helix" evidence="4">
    <location>
        <begin position="153"/>
        <end position="158"/>
    </location>
</feature>
<feature type="strand" evidence="4">
    <location>
        <begin position="165"/>
        <end position="171"/>
    </location>
</feature>
<feature type="helix" evidence="4">
    <location>
        <begin position="177"/>
        <end position="188"/>
    </location>
</feature>
<feature type="turn" evidence="5">
    <location>
        <begin position="189"/>
        <end position="191"/>
    </location>
</feature>
<feature type="strand" evidence="4">
    <location>
        <begin position="193"/>
        <end position="202"/>
    </location>
</feature>
<feature type="helix" evidence="4">
    <location>
        <begin position="205"/>
        <end position="217"/>
    </location>
</feature>
<feature type="helix" evidence="4">
    <location>
        <begin position="221"/>
        <end position="223"/>
    </location>
</feature>
<feature type="strand" evidence="4">
    <location>
        <begin position="224"/>
        <end position="229"/>
    </location>
</feature>
<feature type="helix" evidence="4">
    <location>
        <begin position="235"/>
        <end position="254"/>
    </location>
</feature>
<feature type="strand" evidence="4">
    <location>
        <begin position="260"/>
        <end position="265"/>
    </location>
</feature>
<feature type="helix" evidence="4">
    <location>
        <begin position="267"/>
        <end position="276"/>
    </location>
</feature>
<feature type="helix" evidence="4">
    <location>
        <begin position="279"/>
        <end position="281"/>
    </location>
</feature>
<feature type="helix" evidence="4">
    <location>
        <begin position="294"/>
        <end position="302"/>
    </location>
</feature>
<feature type="strand" evidence="4">
    <location>
        <begin position="313"/>
        <end position="320"/>
    </location>
</feature>
<feature type="helix" evidence="4">
    <location>
        <begin position="322"/>
        <end position="324"/>
    </location>
</feature>
<feature type="helix" evidence="4">
    <location>
        <begin position="329"/>
        <end position="334"/>
    </location>
</feature>
<feature type="helix" evidence="4">
    <location>
        <begin position="335"/>
        <end position="337"/>
    </location>
</feature>
<feature type="strand" evidence="4">
    <location>
        <begin position="339"/>
        <end position="344"/>
    </location>
</feature>
<feature type="helix" evidence="4">
    <location>
        <begin position="346"/>
        <end position="350"/>
    </location>
</feature>
<feature type="turn" evidence="4">
    <location>
        <begin position="359"/>
        <end position="361"/>
    </location>
</feature>
<feature type="strand" evidence="5">
    <location>
        <begin position="363"/>
        <end position="366"/>
    </location>
</feature>
<feature type="helix" evidence="4">
    <location>
        <begin position="369"/>
        <end position="372"/>
    </location>
</feature>
<feature type="helix" evidence="4">
    <location>
        <begin position="374"/>
        <end position="399"/>
    </location>
</feature>
<feature type="helix" evidence="4">
    <location>
        <begin position="402"/>
        <end position="404"/>
    </location>
</feature>
<feature type="helix" evidence="4">
    <location>
        <begin position="407"/>
        <end position="422"/>
    </location>
</feature>
<feature type="helix" evidence="4">
    <location>
        <begin position="428"/>
        <end position="430"/>
    </location>
</feature>
<feature type="helix" evidence="4">
    <location>
        <begin position="431"/>
        <end position="434"/>
    </location>
</feature>
<feature type="helix" evidence="4">
    <location>
        <begin position="443"/>
        <end position="455"/>
    </location>
</feature>
<feature type="turn" evidence="4">
    <location>
        <begin position="456"/>
        <end position="460"/>
    </location>
</feature>
<feature type="strand" evidence="5">
    <location>
        <begin position="466"/>
        <end position="468"/>
    </location>
</feature>
<feature type="helix" evidence="4">
    <location>
        <begin position="472"/>
        <end position="480"/>
    </location>
</feature>
<feature type="turn" evidence="4">
    <location>
        <begin position="481"/>
        <end position="483"/>
    </location>
</feature>